<comment type="function">
    <text evidence="1">Component of the cytochrome b6-f complex, which mediates electron transfer between photosystem II (PSII) and photosystem I (PSI), cyclic electron flow around PSI, and state transitions.</text>
</comment>
<comment type="subunit">
    <text evidence="1">The 4 large subunits of the cytochrome b6-f complex are cytochrome b6, subunit IV (17 kDa polypeptide, PetD), cytochrome f and the Rieske protein, while the 4 small subunits are PetG, PetL, PetM and PetN. The complex functions as a dimer.</text>
</comment>
<comment type="subcellular location">
    <subcellularLocation>
        <location>Plastid</location>
        <location>Chloroplast thylakoid membrane</location>
        <topology>Single-pass membrane protein</topology>
    </subcellularLocation>
</comment>
<comment type="similarity">
    <text evidence="1">Belongs to the PetN family.</text>
</comment>
<evidence type="ECO:0000255" key="1">
    <source>
        <dbReference type="HAMAP-Rule" id="MF_00395"/>
    </source>
</evidence>
<reference key="1">
    <citation type="journal article" date="2006" name="Theor. Appl. Genet.">
        <title>Complete chloroplast genome sequences of Solanum bulbocastanum, Solanum lycopersicum and comparative analyses with other Solanaceae genomes.</title>
        <authorList>
            <person name="Daniell H."/>
            <person name="Lee S.-B."/>
            <person name="Grevich J."/>
            <person name="Saski C."/>
            <person name="Quesada-Vargas T."/>
            <person name="Guda C."/>
            <person name="Tomkins J."/>
            <person name="Jansen R.K."/>
        </authorList>
    </citation>
    <scope>NUCLEOTIDE SEQUENCE [LARGE SCALE GENOMIC DNA]</scope>
    <source>
        <strain>cv. PT29</strain>
    </source>
</reference>
<dbReference type="EMBL" id="DQ347958">
    <property type="protein sequence ID" value="ABC56206.1"/>
    <property type="molecule type" value="Genomic_DNA"/>
</dbReference>
<dbReference type="RefSeq" id="YP_538841.1">
    <property type="nucleotide sequence ID" value="NC_007943.1"/>
</dbReference>
<dbReference type="SMR" id="Q2MIJ4"/>
<dbReference type="GeneID" id="3989545"/>
<dbReference type="GO" id="GO:0009535">
    <property type="term" value="C:chloroplast thylakoid membrane"/>
    <property type="evidence" value="ECO:0007669"/>
    <property type="project" value="UniProtKB-SubCell"/>
</dbReference>
<dbReference type="GO" id="GO:0009512">
    <property type="term" value="C:cytochrome b6f complex"/>
    <property type="evidence" value="ECO:0007669"/>
    <property type="project" value="InterPro"/>
</dbReference>
<dbReference type="GO" id="GO:0045158">
    <property type="term" value="F:electron transporter, transferring electrons within cytochrome b6/f complex of photosystem II activity"/>
    <property type="evidence" value="ECO:0007669"/>
    <property type="project" value="InterPro"/>
</dbReference>
<dbReference type="GO" id="GO:0017004">
    <property type="term" value="P:cytochrome complex assembly"/>
    <property type="evidence" value="ECO:0007669"/>
    <property type="project" value="UniProtKB-UniRule"/>
</dbReference>
<dbReference type="GO" id="GO:0015979">
    <property type="term" value="P:photosynthesis"/>
    <property type="evidence" value="ECO:0007669"/>
    <property type="project" value="UniProtKB-KW"/>
</dbReference>
<dbReference type="HAMAP" id="MF_00395">
    <property type="entry name" value="Cytb6_f_PetN"/>
    <property type="match status" value="1"/>
</dbReference>
<dbReference type="InterPro" id="IPR036143">
    <property type="entry name" value="Cytochr_b6-f_cplx_su8_sf"/>
</dbReference>
<dbReference type="InterPro" id="IPR005497">
    <property type="entry name" value="Cytochrome_b6-f_cplx_su8"/>
</dbReference>
<dbReference type="Pfam" id="PF03742">
    <property type="entry name" value="PetN"/>
    <property type="match status" value="1"/>
</dbReference>
<dbReference type="SUPFAM" id="SSF103451">
    <property type="entry name" value="PetN subunit of the cytochrome b6f complex"/>
    <property type="match status" value="1"/>
</dbReference>
<feature type="chain" id="PRO_0000275564" description="Cytochrome b6-f complex subunit 8">
    <location>
        <begin position="1"/>
        <end position="29"/>
    </location>
</feature>
<feature type="transmembrane region" description="Helical" evidence="1">
    <location>
        <begin position="3"/>
        <end position="23"/>
    </location>
</feature>
<gene>
    <name evidence="1" type="primary">petN</name>
</gene>
<accession>Q2MIJ4</accession>
<organism>
    <name type="scientific">Solanum bulbocastanum</name>
    <name type="common">Wild potato</name>
    <dbReference type="NCBI Taxonomy" id="147425"/>
    <lineage>
        <taxon>Eukaryota</taxon>
        <taxon>Viridiplantae</taxon>
        <taxon>Streptophyta</taxon>
        <taxon>Embryophyta</taxon>
        <taxon>Tracheophyta</taxon>
        <taxon>Spermatophyta</taxon>
        <taxon>Magnoliopsida</taxon>
        <taxon>eudicotyledons</taxon>
        <taxon>Gunneridae</taxon>
        <taxon>Pentapetalae</taxon>
        <taxon>asterids</taxon>
        <taxon>lamiids</taxon>
        <taxon>Solanales</taxon>
        <taxon>Solanaceae</taxon>
        <taxon>Solanoideae</taxon>
        <taxon>Solaneae</taxon>
        <taxon>Solanum</taxon>
    </lineage>
</organism>
<name>PETN_SOLBU</name>
<keyword id="KW-0150">Chloroplast</keyword>
<keyword id="KW-0249">Electron transport</keyword>
<keyword id="KW-0472">Membrane</keyword>
<keyword id="KW-0602">Photosynthesis</keyword>
<keyword id="KW-0934">Plastid</keyword>
<keyword id="KW-0793">Thylakoid</keyword>
<keyword id="KW-0812">Transmembrane</keyword>
<keyword id="KW-1133">Transmembrane helix</keyword>
<keyword id="KW-0813">Transport</keyword>
<geneLocation type="chloroplast"/>
<sequence>MDIVSLAWAALMVVFTFSLSLVVWGRSGL</sequence>
<protein>
    <recommendedName>
        <fullName evidence="1">Cytochrome b6-f complex subunit 8</fullName>
    </recommendedName>
    <alternativeName>
        <fullName evidence="1">Cytochrome b6-f complex subunit PetN</fullName>
    </alternativeName>
    <alternativeName>
        <fullName evidence="1">Cytochrome b6-f complex subunit VIII</fullName>
    </alternativeName>
</protein>
<proteinExistence type="inferred from homology"/>